<protein>
    <recommendedName>
        <fullName evidence="1">Large ribosomal subunit protein uL29</fullName>
    </recommendedName>
    <alternativeName>
        <fullName>60S ribosomal protein L35</fullName>
    </alternativeName>
</protein>
<keyword id="KW-0687">Ribonucleoprotein</keyword>
<keyword id="KW-0689">Ribosomal protein</keyword>
<gene>
    <name type="primary">RPL35</name>
</gene>
<accession>Q9M5L0</accession>
<organism>
    <name type="scientific">Euphorbia esula</name>
    <name type="common">Leafy spurge</name>
    <dbReference type="NCBI Taxonomy" id="3993"/>
    <lineage>
        <taxon>Eukaryota</taxon>
        <taxon>Viridiplantae</taxon>
        <taxon>Streptophyta</taxon>
        <taxon>Embryophyta</taxon>
        <taxon>Tracheophyta</taxon>
        <taxon>Spermatophyta</taxon>
        <taxon>Magnoliopsida</taxon>
        <taxon>eudicotyledons</taxon>
        <taxon>Gunneridae</taxon>
        <taxon>Pentapetalae</taxon>
        <taxon>rosids</taxon>
        <taxon>fabids</taxon>
        <taxon>Malpighiales</taxon>
        <taxon>Euphorbiaceae</taxon>
        <taxon>Euphorbioideae</taxon>
        <taxon>Euphorbieae</taxon>
        <taxon>Euphorbia</taxon>
        <taxon>Euphorbia subgen. Esula</taxon>
        <taxon>Euphorbia sect. Esula</taxon>
    </lineage>
</organism>
<sequence>MARIKVHELRQKTKAELLNQLKDLKAELALLRVAKVTGGAPNKLSKIKVVRLSIAQVLTVISQKQKLALREAYKNKKFLPLDLRPKKTRAIRRRLTKHQQSLKTEREKKKEMYFPMRKYAIKV</sequence>
<dbReference type="EMBL" id="AF227980">
    <property type="protein sequence ID" value="AAF34800.1"/>
    <property type="molecule type" value="mRNA"/>
</dbReference>
<dbReference type="SMR" id="Q9M5L0"/>
<dbReference type="GO" id="GO:0022625">
    <property type="term" value="C:cytosolic large ribosomal subunit"/>
    <property type="evidence" value="ECO:0007669"/>
    <property type="project" value="InterPro"/>
</dbReference>
<dbReference type="GO" id="GO:0003729">
    <property type="term" value="F:mRNA binding"/>
    <property type="evidence" value="ECO:0007669"/>
    <property type="project" value="TreeGrafter"/>
</dbReference>
<dbReference type="GO" id="GO:0003735">
    <property type="term" value="F:structural constituent of ribosome"/>
    <property type="evidence" value="ECO:0007669"/>
    <property type="project" value="InterPro"/>
</dbReference>
<dbReference type="GO" id="GO:0000463">
    <property type="term" value="P:maturation of LSU-rRNA from tricistronic rRNA transcript (SSU-rRNA, 5.8S rRNA, LSU-rRNA)"/>
    <property type="evidence" value="ECO:0007669"/>
    <property type="project" value="InterPro"/>
</dbReference>
<dbReference type="GO" id="GO:0006412">
    <property type="term" value="P:translation"/>
    <property type="evidence" value="ECO:0007669"/>
    <property type="project" value="InterPro"/>
</dbReference>
<dbReference type="CDD" id="cd00427">
    <property type="entry name" value="Ribosomal_L29_HIP"/>
    <property type="match status" value="1"/>
</dbReference>
<dbReference type="FunFam" id="1.10.287.310:FF:000002">
    <property type="entry name" value="60S ribosomal protein L35"/>
    <property type="match status" value="1"/>
</dbReference>
<dbReference type="FunFam" id="6.10.250.3450:FF:000001">
    <property type="entry name" value="60S ribosomal protein L35"/>
    <property type="match status" value="1"/>
</dbReference>
<dbReference type="Gene3D" id="1.10.287.310">
    <property type="match status" value="1"/>
</dbReference>
<dbReference type="Gene3D" id="6.10.250.3450">
    <property type="match status" value="1"/>
</dbReference>
<dbReference type="HAMAP" id="MF_00374">
    <property type="entry name" value="Ribosomal_uL29"/>
    <property type="match status" value="1"/>
</dbReference>
<dbReference type="InterPro" id="IPR001854">
    <property type="entry name" value="Ribosomal_uL29"/>
</dbReference>
<dbReference type="InterPro" id="IPR045059">
    <property type="entry name" value="Ribosomal_uL29_euk"/>
</dbReference>
<dbReference type="InterPro" id="IPR036049">
    <property type="entry name" value="Ribosomal_uL29_sf"/>
</dbReference>
<dbReference type="NCBIfam" id="TIGR00012">
    <property type="entry name" value="L29"/>
    <property type="match status" value="1"/>
</dbReference>
<dbReference type="PANTHER" id="PTHR45722">
    <property type="entry name" value="60S RIBOSOMAL PROTEIN L35"/>
    <property type="match status" value="1"/>
</dbReference>
<dbReference type="PANTHER" id="PTHR45722:SF2">
    <property type="entry name" value="LARGE RIBOSOMAL SUBUNIT PROTEIN UL29-RELATED"/>
    <property type="match status" value="1"/>
</dbReference>
<dbReference type="Pfam" id="PF00831">
    <property type="entry name" value="Ribosomal_L29"/>
    <property type="match status" value="1"/>
</dbReference>
<dbReference type="SUPFAM" id="SSF46561">
    <property type="entry name" value="Ribosomal protein L29 (L29p)"/>
    <property type="match status" value="1"/>
</dbReference>
<evidence type="ECO:0000305" key="1"/>
<reference key="1">
    <citation type="submission" date="2000-01" db="EMBL/GenBank/DDBJ databases">
        <title>Identification of mRNAs expressed in underground adventitious buds of Euphorbia esula (leafy spurge).</title>
        <authorList>
            <person name="Anderson J.V."/>
            <person name="Horvath D.P."/>
        </authorList>
    </citation>
    <scope>NUCLEOTIDE SEQUENCE [MRNA]</scope>
    <source>
        <tissue>Underground adventitious buds</tissue>
    </source>
</reference>
<proteinExistence type="evidence at transcript level"/>
<feature type="chain" id="PRO_0000130549" description="Large ribosomal subunit protein uL29">
    <location>
        <begin position="1"/>
        <end position="123"/>
    </location>
</feature>
<name>RL35_EUPES</name>
<comment type="similarity">
    <text evidence="1">Belongs to the universal ribosomal protein uL29 family.</text>
</comment>